<reference key="1">
    <citation type="journal article" date="2006" name="Nat. Biotechnol.">
        <title>The genome and transcriptomes of the anti-tumor agent Clostridium novyi-NT.</title>
        <authorList>
            <person name="Bettegowda C."/>
            <person name="Huang X."/>
            <person name="Lin J."/>
            <person name="Cheong I."/>
            <person name="Kohli M."/>
            <person name="Szabo S.A."/>
            <person name="Zhang X."/>
            <person name="Diaz L.A. Jr."/>
            <person name="Velculescu V.E."/>
            <person name="Parmigiani G."/>
            <person name="Kinzler K.W."/>
            <person name="Vogelstein B."/>
            <person name="Zhou S."/>
        </authorList>
    </citation>
    <scope>NUCLEOTIDE SEQUENCE [LARGE SCALE GENOMIC DNA]</scope>
    <source>
        <strain>NT</strain>
    </source>
</reference>
<gene>
    <name evidence="1" type="primary">thiE</name>
    <name type="ordered locus">NT01CX_0248</name>
</gene>
<dbReference type="EC" id="2.5.1.3" evidence="1"/>
<dbReference type="EMBL" id="CP000382">
    <property type="protein sequence ID" value="ABK61946.1"/>
    <property type="molecule type" value="Genomic_DNA"/>
</dbReference>
<dbReference type="RefSeq" id="WP_011722740.1">
    <property type="nucleotide sequence ID" value="NC_008593.1"/>
</dbReference>
<dbReference type="SMR" id="A0Q2A0"/>
<dbReference type="STRING" id="386415.NT01CX_0248"/>
<dbReference type="KEGG" id="cno:NT01CX_0248"/>
<dbReference type="PATRIC" id="fig|386415.7.peg.1788"/>
<dbReference type="eggNOG" id="COG0352">
    <property type="taxonomic scope" value="Bacteria"/>
</dbReference>
<dbReference type="HOGENOM" id="CLU_018272_3_2_9"/>
<dbReference type="UniPathway" id="UPA00060">
    <property type="reaction ID" value="UER00141"/>
</dbReference>
<dbReference type="Proteomes" id="UP000008220">
    <property type="component" value="Chromosome"/>
</dbReference>
<dbReference type="GO" id="GO:0005737">
    <property type="term" value="C:cytoplasm"/>
    <property type="evidence" value="ECO:0007669"/>
    <property type="project" value="TreeGrafter"/>
</dbReference>
<dbReference type="GO" id="GO:0000287">
    <property type="term" value="F:magnesium ion binding"/>
    <property type="evidence" value="ECO:0007669"/>
    <property type="project" value="UniProtKB-UniRule"/>
</dbReference>
<dbReference type="GO" id="GO:0004789">
    <property type="term" value="F:thiamine-phosphate diphosphorylase activity"/>
    <property type="evidence" value="ECO:0007669"/>
    <property type="project" value="UniProtKB-UniRule"/>
</dbReference>
<dbReference type="GO" id="GO:0009228">
    <property type="term" value="P:thiamine biosynthetic process"/>
    <property type="evidence" value="ECO:0007669"/>
    <property type="project" value="UniProtKB-KW"/>
</dbReference>
<dbReference type="GO" id="GO:0009229">
    <property type="term" value="P:thiamine diphosphate biosynthetic process"/>
    <property type="evidence" value="ECO:0007669"/>
    <property type="project" value="UniProtKB-UniRule"/>
</dbReference>
<dbReference type="CDD" id="cd00564">
    <property type="entry name" value="TMP_TenI"/>
    <property type="match status" value="1"/>
</dbReference>
<dbReference type="FunFam" id="3.20.20.70:FF:000104">
    <property type="entry name" value="Thiamine biosynthetic bifunctional enzyme"/>
    <property type="match status" value="1"/>
</dbReference>
<dbReference type="Gene3D" id="3.20.20.70">
    <property type="entry name" value="Aldolase class I"/>
    <property type="match status" value="1"/>
</dbReference>
<dbReference type="HAMAP" id="MF_00097">
    <property type="entry name" value="TMP_synthase"/>
    <property type="match status" value="1"/>
</dbReference>
<dbReference type="InterPro" id="IPR013785">
    <property type="entry name" value="Aldolase_TIM"/>
</dbReference>
<dbReference type="InterPro" id="IPR036206">
    <property type="entry name" value="ThiamineP_synth_sf"/>
</dbReference>
<dbReference type="InterPro" id="IPR022998">
    <property type="entry name" value="ThiamineP_synth_TenI"/>
</dbReference>
<dbReference type="InterPro" id="IPR034291">
    <property type="entry name" value="TMP_synthase"/>
</dbReference>
<dbReference type="NCBIfam" id="TIGR00693">
    <property type="entry name" value="thiE"/>
    <property type="match status" value="1"/>
</dbReference>
<dbReference type="PANTHER" id="PTHR20857:SF23">
    <property type="entry name" value="THIAMINE BIOSYNTHETIC BIFUNCTIONAL ENZYME"/>
    <property type="match status" value="1"/>
</dbReference>
<dbReference type="PANTHER" id="PTHR20857">
    <property type="entry name" value="THIAMINE-PHOSPHATE PYROPHOSPHORYLASE"/>
    <property type="match status" value="1"/>
</dbReference>
<dbReference type="Pfam" id="PF02581">
    <property type="entry name" value="TMP-TENI"/>
    <property type="match status" value="1"/>
</dbReference>
<dbReference type="SUPFAM" id="SSF51391">
    <property type="entry name" value="Thiamin phosphate synthase"/>
    <property type="match status" value="1"/>
</dbReference>
<protein>
    <recommendedName>
        <fullName evidence="1">Thiamine-phosphate synthase</fullName>
        <shortName evidence="1">TP synthase</shortName>
        <shortName evidence="1">TPS</shortName>
        <ecNumber evidence="1">2.5.1.3</ecNumber>
    </recommendedName>
    <alternativeName>
        <fullName evidence="1">Thiamine-phosphate pyrophosphorylase</fullName>
        <shortName evidence="1">TMP pyrophosphorylase</shortName>
        <shortName evidence="1">TMP-PPase</shortName>
    </alternativeName>
</protein>
<organism>
    <name type="scientific">Clostridium novyi (strain NT)</name>
    <dbReference type="NCBI Taxonomy" id="386415"/>
    <lineage>
        <taxon>Bacteria</taxon>
        <taxon>Bacillati</taxon>
        <taxon>Bacillota</taxon>
        <taxon>Clostridia</taxon>
        <taxon>Eubacteriales</taxon>
        <taxon>Clostridiaceae</taxon>
        <taxon>Clostridium</taxon>
    </lineage>
</organism>
<comment type="function">
    <text evidence="1">Condenses 4-methyl-5-(beta-hydroxyethyl)thiazole monophosphate (THZ-P) and 2-methyl-4-amino-5-hydroxymethyl pyrimidine pyrophosphate (HMP-PP) to form thiamine monophosphate (TMP).</text>
</comment>
<comment type="catalytic activity">
    <reaction evidence="1">
        <text>2-[(2R,5Z)-2-carboxy-4-methylthiazol-5(2H)-ylidene]ethyl phosphate + 4-amino-2-methyl-5-(diphosphooxymethyl)pyrimidine + 2 H(+) = thiamine phosphate + CO2 + diphosphate</text>
        <dbReference type="Rhea" id="RHEA:47844"/>
        <dbReference type="ChEBI" id="CHEBI:15378"/>
        <dbReference type="ChEBI" id="CHEBI:16526"/>
        <dbReference type="ChEBI" id="CHEBI:33019"/>
        <dbReference type="ChEBI" id="CHEBI:37575"/>
        <dbReference type="ChEBI" id="CHEBI:57841"/>
        <dbReference type="ChEBI" id="CHEBI:62899"/>
        <dbReference type="EC" id="2.5.1.3"/>
    </reaction>
</comment>
<comment type="catalytic activity">
    <reaction evidence="1">
        <text>2-(2-carboxy-4-methylthiazol-5-yl)ethyl phosphate + 4-amino-2-methyl-5-(diphosphooxymethyl)pyrimidine + 2 H(+) = thiamine phosphate + CO2 + diphosphate</text>
        <dbReference type="Rhea" id="RHEA:47848"/>
        <dbReference type="ChEBI" id="CHEBI:15378"/>
        <dbReference type="ChEBI" id="CHEBI:16526"/>
        <dbReference type="ChEBI" id="CHEBI:33019"/>
        <dbReference type="ChEBI" id="CHEBI:37575"/>
        <dbReference type="ChEBI" id="CHEBI:57841"/>
        <dbReference type="ChEBI" id="CHEBI:62890"/>
        <dbReference type="EC" id="2.5.1.3"/>
    </reaction>
</comment>
<comment type="catalytic activity">
    <reaction evidence="1">
        <text>4-methyl-5-(2-phosphooxyethyl)-thiazole + 4-amino-2-methyl-5-(diphosphooxymethyl)pyrimidine + H(+) = thiamine phosphate + diphosphate</text>
        <dbReference type="Rhea" id="RHEA:22328"/>
        <dbReference type="ChEBI" id="CHEBI:15378"/>
        <dbReference type="ChEBI" id="CHEBI:33019"/>
        <dbReference type="ChEBI" id="CHEBI:37575"/>
        <dbReference type="ChEBI" id="CHEBI:57841"/>
        <dbReference type="ChEBI" id="CHEBI:58296"/>
        <dbReference type="EC" id="2.5.1.3"/>
    </reaction>
</comment>
<comment type="cofactor">
    <cofactor evidence="1">
        <name>Mg(2+)</name>
        <dbReference type="ChEBI" id="CHEBI:18420"/>
    </cofactor>
    <text evidence="1">Binds 1 Mg(2+) ion per subunit.</text>
</comment>
<comment type="pathway">
    <text evidence="1">Cofactor biosynthesis; thiamine diphosphate biosynthesis; thiamine phosphate from 4-amino-2-methyl-5-diphosphomethylpyrimidine and 4-methyl-5-(2-phosphoethyl)-thiazole: step 1/1.</text>
</comment>
<comment type="similarity">
    <text evidence="1">Belongs to the thiamine-phosphate synthase family.</text>
</comment>
<feature type="chain" id="PRO_1000093665" description="Thiamine-phosphate synthase">
    <location>
        <begin position="1"/>
        <end position="204"/>
    </location>
</feature>
<feature type="binding site" evidence="1">
    <location>
        <begin position="37"/>
        <end position="41"/>
    </location>
    <ligand>
        <name>4-amino-2-methyl-5-(diphosphooxymethyl)pyrimidine</name>
        <dbReference type="ChEBI" id="CHEBI:57841"/>
    </ligand>
</feature>
<feature type="binding site" evidence="1">
    <location>
        <position position="69"/>
    </location>
    <ligand>
        <name>4-amino-2-methyl-5-(diphosphooxymethyl)pyrimidine</name>
        <dbReference type="ChEBI" id="CHEBI:57841"/>
    </ligand>
</feature>
<feature type="binding site" evidence="1">
    <location>
        <position position="70"/>
    </location>
    <ligand>
        <name>Mg(2+)</name>
        <dbReference type="ChEBI" id="CHEBI:18420"/>
    </ligand>
</feature>
<feature type="binding site" evidence="1">
    <location>
        <position position="89"/>
    </location>
    <ligand>
        <name>Mg(2+)</name>
        <dbReference type="ChEBI" id="CHEBI:18420"/>
    </ligand>
</feature>
<feature type="binding site" evidence="1">
    <location>
        <position position="108"/>
    </location>
    <ligand>
        <name>4-amino-2-methyl-5-(diphosphooxymethyl)pyrimidine</name>
        <dbReference type="ChEBI" id="CHEBI:57841"/>
    </ligand>
</feature>
<feature type="binding site" evidence="1">
    <location>
        <begin position="134"/>
        <end position="136"/>
    </location>
    <ligand>
        <name>2-[(2R,5Z)-2-carboxy-4-methylthiazol-5(2H)-ylidene]ethyl phosphate</name>
        <dbReference type="ChEBI" id="CHEBI:62899"/>
    </ligand>
</feature>
<feature type="binding site" evidence="1">
    <location>
        <position position="137"/>
    </location>
    <ligand>
        <name>4-amino-2-methyl-5-(diphosphooxymethyl)pyrimidine</name>
        <dbReference type="ChEBI" id="CHEBI:57841"/>
    </ligand>
</feature>
<feature type="binding site" evidence="1">
    <location>
        <position position="165"/>
    </location>
    <ligand>
        <name>2-[(2R,5Z)-2-carboxy-4-methylthiazol-5(2H)-ylidene]ethyl phosphate</name>
        <dbReference type="ChEBI" id="CHEBI:62899"/>
    </ligand>
</feature>
<feature type="binding site" evidence="1">
    <location>
        <begin position="185"/>
        <end position="186"/>
    </location>
    <ligand>
        <name>2-[(2R,5Z)-2-carboxy-4-methylthiazol-5(2H)-ylidene]ethyl phosphate</name>
        <dbReference type="ChEBI" id="CHEBI:62899"/>
    </ligand>
</feature>
<keyword id="KW-0460">Magnesium</keyword>
<keyword id="KW-0479">Metal-binding</keyword>
<keyword id="KW-1185">Reference proteome</keyword>
<keyword id="KW-0784">Thiamine biosynthesis</keyword>
<keyword id="KW-0808">Transferase</keyword>
<name>THIE_CLONN</name>
<evidence type="ECO:0000255" key="1">
    <source>
        <dbReference type="HAMAP-Rule" id="MF_00097"/>
    </source>
</evidence>
<accession>A0Q2A0</accession>
<sequence>MDINYKLYLITDRSFLNGRSLAECVEDAIKGGATLVQVREKNISTRDFYNIAREVQEVTTKYNVPLLINDRIDIALAINADGVHLGQSDMPIELARKILGDDKVIGISAGNVKEAIEAEKAGADYVGLGTVFFTGTKKDIDEPIGLAGLKEITEKITIPSVAIGGINKENAKSVLATGVDGISVISAILKNDDIQGASKTLANI</sequence>
<proteinExistence type="inferred from homology"/>